<accession>A1AE61</accession>
<name>PEPB_ECOK1</name>
<evidence type="ECO:0000255" key="1">
    <source>
        <dbReference type="HAMAP-Rule" id="MF_00504"/>
    </source>
</evidence>
<protein>
    <recommendedName>
        <fullName evidence="1">Peptidase B</fullName>
        <ecNumber evidence="1">3.4.11.23</ecNumber>
    </recommendedName>
    <alternativeName>
        <fullName evidence="1">Aminopeptidase B</fullName>
    </alternativeName>
</protein>
<reference key="1">
    <citation type="journal article" date="2007" name="J. Bacteriol.">
        <title>The genome sequence of avian pathogenic Escherichia coli strain O1:K1:H7 shares strong similarities with human extraintestinal pathogenic E. coli genomes.</title>
        <authorList>
            <person name="Johnson T.J."/>
            <person name="Kariyawasam S."/>
            <person name="Wannemuehler Y."/>
            <person name="Mangiamele P."/>
            <person name="Johnson S.J."/>
            <person name="Doetkott C."/>
            <person name="Skyberg J.A."/>
            <person name="Lynne A.M."/>
            <person name="Johnson J.R."/>
            <person name="Nolan L.K."/>
        </authorList>
    </citation>
    <scope>NUCLEOTIDE SEQUENCE [LARGE SCALE GENOMIC DNA]</scope>
</reference>
<keyword id="KW-0031">Aminopeptidase</keyword>
<keyword id="KW-0963">Cytoplasm</keyword>
<keyword id="KW-0378">Hydrolase</keyword>
<keyword id="KW-0464">Manganese</keyword>
<keyword id="KW-0479">Metal-binding</keyword>
<keyword id="KW-0645">Protease</keyword>
<keyword id="KW-1185">Reference proteome</keyword>
<proteinExistence type="inferred from homology"/>
<gene>
    <name evidence="1" type="primary">pepB</name>
    <name type="ordered locus">Ecok1_24570</name>
    <name type="ORF">APECO1_4001</name>
</gene>
<feature type="chain" id="PRO_1000014888" description="Peptidase B">
    <location>
        <begin position="1"/>
        <end position="427"/>
    </location>
</feature>
<feature type="active site" evidence="1">
    <location>
        <position position="207"/>
    </location>
</feature>
<feature type="active site" evidence="1">
    <location>
        <position position="281"/>
    </location>
</feature>
<feature type="binding site" evidence="1">
    <location>
        <position position="195"/>
    </location>
    <ligand>
        <name>Mn(2+)</name>
        <dbReference type="ChEBI" id="CHEBI:29035"/>
        <label>2</label>
    </ligand>
</feature>
<feature type="binding site" evidence="1">
    <location>
        <position position="200"/>
    </location>
    <ligand>
        <name>Mn(2+)</name>
        <dbReference type="ChEBI" id="CHEBI:29035"/>
        <label>1</label>
    </ligand>
</feature>
<feature type="binding site" evidence="1">
    <location>
        <position position="200"/>
    </location>
    <ligand>
        <name>Mn(2+)</name>
        <dbReference type="ChEBI" id="CHEBI:29035"/>
        <label>2</label>
    </ligand>
</feature>
<feature type="binding site" evidence="1">
    <location>
        <position position="218"/>
    </location>
    <ligand>
        <name>Mn(2+)</name>
        <dbReference type="ChEBI" id="CHEBI:29035"/>
        <label>2</label>
    </ligand>
</feature>
<feature type="binding site" evidence="1">
    <location>
        <position position="277"/>
    </location>
    <ligand>
        <name>Mn(2+)</name>
        <dbReference type="ChEBI" id="CHEBI:29035"/>
        <label>1</label>
    </ligand>
</feature>
<feature type="binding site" evidence="1">
    <location>
        <position position="279"/>
    </location>
    <ligand>
        <name>Mn(2+)</name>
        <dbReference type="ChEBI" id="CHEBI:29035"/>
        <label>1</label>
    </ligand>
</feature>
<feature type="binding site" evidence="1">
    <location>
        <position position="279"/>
    </location>
    <ligand>
        <name>Mn(2+)</name>
        <dbReference type="ChEBI" id="CHEBI:29035"/>
        <label>2</label>
    </ligand>
</feature>
<dbReference type="EC" id="3.4.11.23" evidence="1"/>
<dbReference type="EMBL" id="CP000468">
    <property type="protein sequence ID" value="ABJ01951.1"/>
    <property type="molecule type" value="Genomic_DNA"/>
</dbReference>
<dbReference type="RefSeq" id="WP_000133562.1">
    <property type="nucleotide sequence ID" value="NZ_CADILS010000012.1"/>
</dbReference>
<dbReference type="SMR" id="A1AE61"/>
<dbReference type="MEROPS" id="M17.004"/>
<dbReference type="KEGG" id="ecv:APECO1_4001"/>
<dbReference type="HOGENOM" id="CLU_013734_7_1_6"/>
<dbReference type="Proteomes" id="UP000008216">
    <property type="component" value="Chromosome"/>
</dbReference>
<dbReference type="GO" id="GO:0005737">
    <property type="term" value="C:cytoplasm"/>
    <property type="evidence" value="ECO:0007669"/>
    <property type="project" value="UniProtKB-SubCell"/>
</dbReference>
<dbReference type="GO" id="GO:0030145">
    <property type="term" value="F:manganese ion binding"/>
    <property type="evidence" value="ECO:0007669"/>
    <property type="project" value="UniProtKB-UniRule"/>
</dbReference>
<dbReference type="GO" id="GO:0070006">
    <property type="term" value="F:metalloaminopeptidase activity"/>
    <property type="evidence" value="ECO:0007669"/>
    <property type="project" value="InterPro"/>
</dbReference>
<dbReference type="GO" id="GO:0006508">
    <property type="term" value="P:proteolysis"/>
    <property type="evidence" value="ECO:0007669"/>
    <property type="project" value="UniProtKB-UniRule"/>
</dbReference>
<dbReference type="CDD" id="cd00433">
    <property type="entry name" value="Peptidase_M17"/>
    <property type="match status" value="1"/>
</dbReference>
<dbReference type="FunFam" id="3.40.630.10:FF:000037">
    <property type="entry name" value="Peptidase B"/>
    <property type="match status" value="1"/>
</dbReference>
<dbReference type="Gene3D" id="3.40.630.10">
    <property type="entry name" value="Zn peptidases"/>
    <property type="match status" value="1"/>
</dbReference>
<dbReference type="HAMAP" id="MF_00504">
    <property type="entry name" value="Aminopeptidase_M17"/>
    <property type="match status" value="1"/>
</dbReference>
<dbReference type="InterPro" id="IPR011356">
    <property type="entry name" value="Leucine_aapep/pepB"/>
</dbReference>
<dbReference type="InterPro" id="IPR047620">
    <property type="entry name" value="M17_PepB-like_N"/>
</dbReference>
<dbReference type="InterPro" id="IPR008330">
    <property type="entry name" value="Pept_M17_PepB"/>
</dbReference>
<dbReference type="InterPro" id="IPR000819">
    <property type="entry name" value="Peptidase_M17_C"/>
</dbReference>
<dbReference type="NCBIfam" id="NF003450">
    <property type="entry name" value="PRK05015.1"/>
    <property type="match status" value="1"/>
</dbReference>
<dbReference type="PANTHER" id="PTHR11963">
    <property type="entry name" value="LEUCINE AMINOPEPTIDASE-RELATED"/>
    <property type="match status" value="1"/>
</dbReference>
<dbReference type="PANTHER" id="PTHR11963:SF20">
    <property type="entry name" value="PEPTIDASE B"/>
    <property type="match status" value="1"/>
</dbReference>
<dbReference type="Pfam" id="PF12404">
    <property type="entry name" value="DUF3663"/>
    <property type="match status" value="1"/>
</dbReference>
<dbReference type="Pfam" id="PF00883">
    <property type="entry name" value="Peptidase_M17"/>
    <property type="match status" value="1"/>
</dbReference>
<dbReference type="PIRSF" id="PIRSF036388">
    <property type="entry name" value="Ctsl_amnpptdse_B"/>
    <property type="match status" value="1"/>
</dbReference>
<dbReference type="PRINTS" id="PR00481">
    <property type="entry name" value="LAMNOPPTDASE"/>
</dbReference>
<dbReference type="SUPFAM" id="SSF53187">
    <property type="entry name" value="Zn-dependent exopeptidases"/>
    <property type="match status" value="1"/>
</dbReference>
<dbReference type="PROSITE" id="PS00631">
    <property type="entry name" value="CYTOSOL_AP"/>
    <property type="match status" value="1"/>
</dbReference>
<organism>
    <name type="scientific">Escherichia coli O1:K1 / APEC</name>
    <dbReference type="NCBI Taxonomy" id="405955"/>
    <lineage>
        <taxon>Bacteria</taxon>
        <taxon>Pseudomonadati</taxon>
        <taxon>Pseudomonadota</taxon>
        <taxon>Gammaproteobacteria</taxon>
        <taxon>Enterobacterales</taxon>
        <taxon>Enterobacteriaceae</taxon>
        <taxon>Escherichia</taxon>
    </lineage>
</organism>
<sequence>MTEAMKITLSTQPADARWGEKATYSINNDGITLHLNGADDLGLIQRAARKIDGLGIKHVQLSGEGWDADRCWAFWQGYKAPKGIRKVEWPDLDDAQRQELDNRLMIIDWVRDTINAPAEELGPSQLAQRAVDLISNVAGDRVTYRITKGEDLREQGYMGLHTVGRGSERSPVLLALDYNPTGDKEAPVYACLVGKGITFDSGGYSIKQTAFMDSMKSDMGGAATVTGALAFAITRGLNKRVKLFLCCADNLISGNAFKLGDIITYRNGKKVEVMNTDAEGRLVLADGLIDASAQKPELIIDAATLTGAAKTALGNDYHALFSFDDALAGRLLASAAQENEPFWRLPLAEFHRNQLPSNFAELNNTGSAAYPAGASTAAGFLSHFVENYQQGWLHIDCSATYRKAPVEQWSAGATGLGVRTIANLLTA</sequence>
<comment type="function">
    <text evidence="1">Probably plays an important role in intracellular peptide degradation.</text>
</comment>
<comment type="catalytic activity">
    <reaction evidence="1">
        <text>Release of an N-terminal amino acid, Xaa, from a peptide or arylamide. Xaa is preferably Glu or Asp but may be other amino acids, including Leu, Met, His, Cys and Gln.</text>
        <dbReference type="EC" id="3.4.11.23"/>
    </reaction>
</comment>
<comment type="cofactor">
    <cofactor evidence="1">
        <name>Mn(2+)</name>
        <dbReference type="ChEBI" id="CHEBI:29035"/>
    </cofactor>
    <text evidence="1">Binds 2 manganese ions per subunit.</text>
</comment>
<comment type="subunit">
    <text evidence="1">Homohexamer.</text>
</comment>
<comment type="subcellular location">
    <subcellularLocation>
        <location evidence="1">Cytoplasm</location>
    </subcellularLocation>
</comment>
<comment type="similarity">
    <text evidence="1">Belongs to the peptidase M17 family.</text>
</comment>